<protein>
    <recommendedName>
        <fullName>Leucine-rich repeat-containing protein 59</fullName>
    </recommendedName>
    <alternativeName>
        <fullName>Protein p34</fullName>
    </alternativeName>
    <component>
        <recommendedName>
            <fullName>Leucine-rich repeat-containing protein 59, N-terminally processed</fullName>
        </recommendedName>
    </component>
</protein>
<reference key="1">
    <citation type="journal article" date="1993" name="Biochem. J.">
        <title>Ribosome-binding protein p34 is a member of the leucine-rich-repeat-protein superfamily.</title>
        <authorList>
            <person name="Ohsumi T."/>
            <person name="Ichimura T."/>
            <person name="Sugano H."/>
            <person name="Omata S."/>
            <person name="Isobe T."/>
            <person name="Kuwano R."/>
        </authorList>
    </citation>
    <scope>NUCLEOTIDE SEQUENCE [MRNA]</scope>
    <scope>SUBCELLULAR LOCATION</scope>
    <scope>TOPOLOGY</scope>
    <source>
        <tissue>Liver</tissue>
    </source>
</reference>
<reference key="2">
    <citation type="journal article" date="2004" name="Genome Res.">
        <title>The status, quality, and expansion of the NIH full-length cDNA project: the Mammalian Gene Collection (MGC).</title>
        <authorList>
            <consortium name="The MGC Project Team"/>
        </authorList>
    </citation>
    <scope>NUCLEOTIDE SEQUENCE [LARGE SCALE MRNA]</scope>
    <source>
        <tissue>Ovary</tissue>
    </source>
</reference>
<gene>
    <name type="primary">Lrrc59</name>
    <name type="synonym">Rbp34</name>
</gene>
<comment type="function">
    <text evidence="1">Required for nuclear import of FGF1, but not that of FGF2. Might regulate nuclear import of exogenous FGF1 by facilitating interaction with the nuclear import machinery and by transporting cytosolic FGF1 to, and possibly through, the nuclear pores (By similarity).</text>
</comment>
<comment type="subunit">
    <text evidence="1">Can form homodimers. Interacts with SGO1. Interacts with FGF1.</text>
</comment>
<comment type="subcellular location">
    <subcellularLocation>
        <location evidence="1">Microsome membrane</location>
        <topology evidence="1">Single-pass type II membrane protein</topology>
    </subcellularLocation>
    <subcellularLocation>
        <location evidence="1">Endoplasmic reticulum membrane</location>
        <topology evidence="1">Single-pass type II membrane protein</topology>
    </subcellularLocation>
    <subcellularLocation>
        <location evidence="1">Nucleus envelope</location>
    </subcellularLocation>
    <text evidence="1">Localization in the nuclear envelope depends upon the nuclear import machinery, including KPNB1.</text>
</comment>
<accession>Q5RJR8</accession>
<accession>Q63742</accession>
<name>LRC59_RAT</name>
<feature type="chain" id="PRO_0000235161" description="Leucine-rich repeat-containing protein 59">
    <location>
        <begin position="1"/>
        <end position="307"/>
    </location>
</feature>
<feature type="initiator methionine" description="Removed; alternate" evidence="3">
    <location>
        <position position="1"/>
    </location>
</feature>
<feature type="chain" id="PRO_0000441741" description="Leucine-rich repeat-containing protein 59, N-terminally processed">
    <location>
        <begin position="2"/>
        <end position="307"/>
    </location>
</feature>
<feature type="topological domain" description="Cytoplasmic" evidence="4">
    <location>
        <begin position="2"/>
        <end position="244"/>
    </location>
</feature>
<feature type="transmembrane region" description="Helical" evidence="4">
    <location>
        <begin position="245"/>
        <end position="265"/>
    </location>
</feature>
<feature type="topological domain" description="Lumenal" evidence="4">
    <location>
        <begin position="266"/>
        <end position="307"/>
    </location>
</feature>
<feature type="repeat" description="LRR 1">
    <location>
        <begin position="10"/>
        <end position="31"/>
    </location>
</feature>
<feature type="repeat" description="LRR 2">
    <location>
        <begin position="40"/>
        <end position="62"/>
    </location>
</feature>
<feature type="repeat" description="LRR 3">
    <location>
        <begin position="63"/>
        <end position="84"/>
    </location>
</feature>
<feature type="repeat" description="LRR 4">
    <location>
        <begin position="86"/>
        <end position="107"/>
    </location>
</feature>
<feature type="repeat" description="LRR 5">
    <location>
        <begin position="109"/>
        <end position="128"/>
    </location>
</feature>
<feature type="region of interest" description="Disordered" evidence="5">
    <location>
        <begin position="150"/>
        <end position="242"/>
    </location>
</feature>
<feature type="coiled-coil region" evidence="4">
    <location>
        <begin position="148"/>
        <end position="216"/>
    </location>
</feature>
<feature type="compositionally biased region" description="Basic and acidic residues" evidence="5">
    <location>
        <begin position="154"/>
        <end position="221"/>
    </location>
</feature>
<feature type="compositionally biased region" description="Basic residues" evidence="5">
    <location>
        <begin position="229"/>
        <end position="242"/>
    </location>
</feature>
<feature type="modified residue" description="N-acetylmethionine" evidence="3">
    <location>
        <position position="1"/>
    </location>
</feature>
<feature type="modified residue" description="N-acetylthreonine; in Leucine-rich repeat-containing protein 59, N-terminally processed" evidence="3">
    <location>
        <position position="2"/>
    </location>
</feature>
<feature type="modified residue" description="Phosphoserine" evidence="3">
    <location>
        <position position="23"/>
    </location>
</feature>
<feature type="modified residue" description="Phosphoserine" evidence="3">
    <location>
        <position position="25"/>
    </location>
</feature>
<feature type="modified residue" description="N6-succinyllysine" evidence="2">
    <location>
        <position position="73"/>
    </location>
</feature>
<feature type="modified residue" description="N6-acetyllysine" evidence="2">
    <location>
        <position position="135"/>
    </location>
</feature>
<keyword id="KW-0007">Acetylation</keyword>
<keyword id="KW-0175">Coiled coil</keyword>
<keyword id="KW-0256">Endoplasmic reticulum</keyword>
<keyword id="KW-0433">Leucine-rich repeat</keyword>
<keyword id="KW-0472">Membrane</keyword>
<keyword id="KW-0492">Microsome</keyword>
<keyword id="KW-0539">Nucleus</keyword>
<keyword id="KW-0597">Phosphoprotein</keyword>
<keyword id="KW-1185">Reference proteome</keyword>
<keyword id="KW-0677">Repeat</keyword>
<keyword id="KW-0735">Signal-anchor</keyword>
<keyword id="KW-0812">Transmembrane</keyword>
<keyword id="KW-1133">Transmembrane helix</keyword>
<organism>
    <name type="scientific">Rattus norvegicus</name>
    <name type="common">Rat</name>
    <dbReference type="NCBI Taxonomy" id="10116"/>
    <lineage>
        <taxon>Eukaryota</taxon>
        <taxon>Metazoa</taxon>
        <taxon>Chordata</taxon>
        <taxon>Craniata</taxon>
        <taxon>Vertebrata</taxon>
        <taxon>Euteleostomi</taxon>
        <taxon>Mammalia</taxon>
        <taxon>Eutheria</taxon>
        <taxon>Euarchontoglires</taxon>
        <taxon>Glires</taxon>
        <taxon>Rodentia</taxon>
        <taxon>Myomorpha</taxon>
        <taxon>Muroidea</taxon>
        <taxon>Muridae</taxon>
        <taxon>Murinae</taxon>
        <taxon>Rattus</taxon>
    </lineage>
</organism>
<dbReference type="EMBL" id="D13623">
    <property type="protein sequence ID" value="BAA02786.1"/>
    <property type="molecule type" value="mRNA"/>
</dbReference>
<dbReference type="EMBL" id="BC086530">
    <property type="protein sequence ID" value="AAH86530.1"/>
    <property type="molecule type" value="mRNA"/>
</dbReference>
<dbReference type="RefSeq" id="NP_001008281.1">
    <property type="nucleotide sequence ID" value="NM_001008280.1"/>
</dbReference>
<dbReference type="SMR" id="Q5RJR8"/>
<dbReference type="BioGRID" id="252266">
    <property type="interactions" value="2"/>
</dbReference>
<dbReference type="FunCoup" id="Q5RJR8">
    <property type="interactions" value="2121"/>
</dbReference>
<dbReference type="IntAct" id="Q5RJR8">
    <property type="interactions" value="1"/>
</dbReference>
<dbReference type="STRING" id="10116.ENSRNOP00000004941"/>
<dbReference type="iPTMnet" id="Q5RJR8"/>
<dbReference type="PhosphoSitePlus" id="Q5RJR8"/>
<dbReference type="jPOST" id="Q5RJR8"/>
<dbReference type="PaxDb" id="10116-ENSRNOP00000004941"/>
<dbReference type="Ensembl" id="ENSRNOT00000004941.5">
    <property type="protein sequence ID" value="ENSRNOP00000004941.2"/>
    <property type="gene ID" value="ENSRNOG00000003524.5"/>
</dbReference>
<dbReference type="GeneID" id="287633"/>
<dbReference type="KEGG" id="rno:287633"/>
<dbReference type="UCSC" id="RGD:1305092">
    <property type="organism name" value="rat"/>
</dbReference>
<dbReference type="AGR" id="RGD:1305092"/>
<dbReference type="CTD" id="55379"/>
<dbReference type="RGD" id="1305092">
    <property type="gene designation" value="Lrrc59"/>
</dbReference>
<dbReference type="eggNOG" id="KOG0473">
    <property type="taxonomic scope" value="Eukaryota"/>
</dbReference>
<dbReference type="eggNOG" id="KOG0619">
    <property type="taxonomic scope" value="Eukaryota"/>
</dbReference>
<dbReference type="GeneTree" id="ENSGT00390000017385"/>
<dbReference type="HOGENOM" id="CLU_062247_1_0_1"/>
<dbReference type="InParanoid" id="Q5RJR8"/>
<dbReference type="OMA" id="CASVNTI"/>
<dbReference type="OrthoDB" id="89765at9989"/>
<dbReference type="PhylomeDB" id="Q5RJR8"/>
<dbReference type="TreeFam" id="TF316929"/>
<dbReference type="PRO" id="PR:Q5RJR8"/>
<dbReference type="Proteomes" id="UP000002494">
    <property type="component" value="Chromosome 10"/>
</dbReference>
<dbReference type="Bgee" id="ENSRNOG00000003524">
    <property type="expression patterns" value="Expressed in jejunum and 19 other cell types or tissues"/>
</dbReference>
<dbReference type="GO" id="GO:0005737">
    <property type="term" value="C:cytoplasm"/>
    <property type="evidence" value="ECO:0000318"/>
    <property type="project" value="GO_Central"/>
</dbReference>
<dbReference type="GO" id="GO:0005789">
    <property type="term" value="C:endoplasmic reticulum membrane"/>
    <property type="evidence" value="ECO:0007669"/>
    <property type="project" value="UniProtKB-SubCell"/>
</dbReference>
<dbReference type="GO" id="GO:0042645">
    <property type="term" value="C:mitochondrial nucleoid"/>
    <property type="evidence" value="ECO:0000266"/>
    <property type="project" value="RGD"/>
</dbReference>
<dbReference type="GO" id="GO:0005635">
    <property type="term" value="C:nuclear envelope"/>
    <property type="evidence" value="ECO:0007669"/>
    <property type="project" value="UniProtKB-SubCell"/>
</dbReference>
<dbReference type="GO" id="GO:0035556">
    <property type="term" value="P:intracellular signal transduction"/>
    <property type="evidence" value="ECO:0000318"/>
    <property type="project" value="GO_Central"/>
</dbReference>
<dbReference type="FunFam" id="3.80.10.10:FF:000141">
    <property type="entry name" value="Leucine-rich repeat-containing protein 59"/>
    <property type="match status" value="1"/>
</dbReference>
<dbReference type="Gene3D" id="3.80.10.10">
    <property type="entry name" value="Ribonuclease Inhibitor"/>
    <property type="match status" value="1"/>
</dbReference>
<dbReference type="InterPro" id="IPR001611">
    <property type="entry name" value="Leu-rich_rpt"/>
</dbReference>
<dbReference type="InterPro" id="IPR003591">
    <property type="entry name" value="Leu-rich_rpt_typical-subtyp"/>
</dbReference>
<dbReference type="InterPro" id="IPR032675">
    <property type="entry name" value="LRR_dom_sf"/>
</dbReference>
<dbReference type="InterPro" id="IPR050216">
    <property type="entry name" value="LRR_domain-containing"/>
</dbReference>
<dbReference type="PANTHER" id="PTHR48051">
    <property type="match status" value="1"/>
</dbReference>
<dbReference type="PANTHER" id="PTHR48051:SF42">
    <property type="entry name" value="LEUCINE-RICH REPEAT-CONTAINING PROTEIN 18-LIKE"/>
    <property type="match status" value="1"/>
</dbReference>
<dbReference type="Pfam" id="PF00560">
    <property type="entry name" value="LRR_1"/>
    <property type="match status" value="1"/>
</dbReference>
<dbReference type="Pfam" id="PF13855">
    <property type="entry name" value="LRR_8"/>
    <property type="match status" value="1"/>
</dbReference>
<dbReference type="PRINTS" id="PR00019">
    <property type="entry name" value="LEURICHRPT"/>
</dbReference>
<dbReference type="SMART" id="SM00369">
    <property type="entry name" value="LRR_TYP"/>
    <property type="match status" value="4"/>
</dbReference>
<dbReference type="SUPFAM" id="SSF52058">
    <property type="entry name" value="L domain-like"/>
    <property type="match status" value="1"/>
</dbReference>
<dbReference type="PROSITE" id="PS51450">
    <property type="entry name" value="LRR"/>
    <property type="match status" value="4"/>
</dbReference>
<sequence>MTKTGSKGGNLRDKLDGNELDLSLSDLNEVPVKELAALPKATVLDLSCNKLSTLPSDFCGLTHLVKLDLSKNKLQQLPADFGRLVNLQHLDLLNNRLVTLPVSFAQLKNLKWLDLKDNPLDPVLAKVAGDCLDEKQCKQCANKVLQHMKAVQADQERERQRRLEVEREAEKKREAKQQAKEAKERELRKREKAEEKERRRKEYDAQKASKREQEKKPKKETNQAPKSKSGSRPRKPPPRKHNRSWAVLKGLLLLLLLCVAGGLVVCRVTGLQQQPLCTSVNAIYDNAVQGLRHHEILQWVLQTDSQQ</sequence>
<evidence type="ECO:0000250" key="1"/>
<evidence type="ECO:0000250" key="2">
    <source>
        <dbReference type="UniProtKB" id="Q922Q8"/>
    </source>
</evidence>
<evidence type="ECO:0000250" key="3">
    <source>
        <dbReference type="UniProtKB" id="Q96AG4"/>
    </source>
</evidence>
<evidence type="ECO:0000255" key="4"/>
<evidence type="ECO:0000256" key="5">
    <source>
        <dbReference type="SAM" id="MobiDB-lite"/>
    </source>
</evidence>
<proteinExistence type="evidence at protein level"/>